<evidence type="ECO:0000255" key="1"/>
<evidence type="ECO:0000305" key="2"/>
<evidence type="ECO:0007744" key="3">
    <source>
    </source>
</evidence>
<sequence>MAAKQPPPLMKKHSQTDLVSRLKTRKILGVGGEDDDGEVHRSKISQVLGNEIKFAVREPLGLRVWQFLSAMLFSSVAIMALALPDQLYDAVFDGAEVTSKTPIRLYGGALLSISLIMWNALYTAEKVIIRWTLLTEACYFGVQSLVVTATLAETGLMSLGTLLLLASRLLFVIVSIYYYYQVGRKPKKV</sequence>
<feature type="chain" id="PRO_0000395043" description="Tumor protein p53-inducible protein 11">
    <location>
        <begin position="1"/>
        <end position="189"/>
    </location>
</feature>
<feature type="topological domain" description="Cytoplasmic" evidence="1">
    <location>
        <begin position="1"/>
        <end position="63"/>
    </location>
</feature>
<feature type="transmembrane region" description="Helical" evidence="1">
    <location>
        <begin position="64"/>
        <end position="84"/>
    </location>
</feature>
<feature type="topological domain" description="Extracellular" evidence="1">
    <location>
        <begin position="85"/>
        <end position="108"/>
    </location>
</feature>
<feature type="transmembrane region" description="Helical" evidence="1">
    <location>
        <begin position="109"/>
        <end position="129"/>
    </location>
</feature>
<feature type="topological domain" description="Cytoplasmic" evidence="1">
    <location>
        <position position="130"/>
    </location>
</feature>
<feature type="transmembrane region" description="Helical" evidence="1">
    <location>
        <begin position="131"/>
        <end position="151"/>
    </location>
</feature>
<feature type="topological domain" description="Extracellular" evidence="1">
    <location>
        <begin position="152"/>
        <end position="155"/>
    </location>
</feature>
<feature type="transmembrane region" description="Helical" evidence="1">
    <location>
        <begin position="156"/>
        <end position="176"/>
    </location>
</feature>
<feature type="topological domain" description="Cytoplasmic" evidence="1">
    <location>
        <begin position="177"/>
        <end position="189"/>
    </location>
</feature>
<feature type="modified residue" description="Phosphoserine" evidence="3">
    <location>
        <position position="14"/>
    </location>
</feature>
<reference key="1">
    <citation type="submission" date="2005-07" db="EMBL/GenBank/DDBJ databases">
        <authorList>
            <person name="Mural R.J."/>
            <person name="Adams M.D."/>
            <person name="Myers E.W."/>
            <person name="Smith H.O."/>
            <person name="Venter J.C."/>
        </authorList>
    </citation>
    <scope>NUCLEOTIDE SEQUENCE [LARGE SCALE GENOMIC DNA]</scope>
</reference>
<reference key="2">
    <citation type="journal article" date="2004" name="Genome Res.">
        <title>The status, quality, and expansion of the NIH full-length cDNA project: the Mammalian Gene Collection (MGC).</title>
        <authorList>
            <consortium name="The MGC Project Team"/>
        </authorList>
    </citation>
    <scope>NUCLEOTIDE SEQUENCE [LARGE SCALE MRNA]</scope>
    <source>
        <tissue>Lung</tissue>
    </source>
</reference>
<reference key="3">
    <citation type="journal article" date="2012" name="Nat. Commun.">
        <title>Quantitative maps of protein phosphorylation sites across 14 different rat organs and tissues.</title>
        <authorList>
            <person name="Lundby A."/>
            <person name="Secher A."/>
            <person name="Lage K."/>
            <person name="Nordsborg N.B."/>
            <person name="Dmytriyev A."/>
            <person name="Lundby C."/>
            <person name="Olsen J.V."/>
        </authorList>
    </citation>
    <scope>PHOSPHORYLATION [LARGE SCALE ANALYSIS] AT SER-14</scope>
    <scope>IDENTIFICATION BY MASS SPECTROMETRY [LARGE SCALE ANALYSIS]</scope>
</reference>
<accession>B3DMA0</accession>
<name>P5I11_RAT</name>
<proteinExistence type="evidence at protein level"/>
<comment type="subcellular location">
    <subcellularLocation>
        <location evidence="2">Membrane</location>
        <topology evidence="2">Multi-pass membrane protein</topology>
    </subcellularLocation>
</comment>
<keyword id="KW-0472">Membrane</keyword>
<keyword id="KW-0597">Phosphoprotein</keyword>
<keyword id="KW-1185">Reference proteome</keyword>
<keyword id="KW-0812">Transmembrane</keyword>
<keyword id="KW-1133">Transmembrane helix</keyword>
<gene>
    <name type="primary">Tp53i11</name>
    <name type="synonym">Pig11</name>
</gene>
<protein>
    <recommendedName>
        <fullName>Tumor protein p53-inducible protein 11</fullName>
    </recommendedName>
    <alternativeName>
        <fullName>p53-induced gene 11 protein</fullName>
    </alternativeName>
</protein>
<dbReference type="EMBL" id="CH473949">
    <property type="protein sequence ID" value="EDL79586.1"/>
    <property type="molecule type" value="Genomic_DNA"/>
</dbReference>
<dbReference type="EMBL" id="BC167758">
    <property type="protein sequence ID" value="AAI67758.1"/>
    <property type="molecule type" value="mRNA"/>
</dbReference>
<dbReference type="RefSeq" id="NP_001101219.1">
    <property type="nucleotide sequence ID" value="NM_001107749.3"/>
</dbReference>
<dbReference type="RefSeq" id="NP_001386422.1">
    <property type="nucleotide sequence ID" value="NM_001399493.2"/>
</dbReference>
<dbReference type="RefSeq" id="NP_001386423.1">
    <property type="nucleotide sequence ID" value="NM_001399494.2"/>
</dbReference>
<dbReference type="RefSeq" id="XP_006234634.1">
    <property type="nucleotide sequence ID" value="XM_006234572.3"/>
</dbReference>
<dbReference type="FunCoup" id="B3DMA0">
    <property type="interactions" value="488"/>
</dbReference>
<dbReference type="STRING" id="10116.ENSRNOP00000053834"/>
<dbReference type="iPTMnet" id="B3DMA0"/>
<dbReference type="PhosphoSitePlus" id="B3DMA0"/>
<dbReference type="jPOST" id="B3DMA0"/>
<dbReference type="PaxDb" id="10116-ENSRNOP00000053834"/>
<dbReference type="PeptideAtlas" id="B3DMA0"/>
<dbReference type="GeneID" id="311209"/>
<dbReference type="KEGG" id="rno:311209"/>
<dbReference type="UCSC" id="RGD:1308395">
    <property type="organism name" value="rat"/>
</dbReference>
<dbReference type="AGR" id="RGD:1308395"/>
<dbReference type="CTD" id="9537"/>
<dbReference type="RGD" id="1308395">
    <property type="gene designation" value="Tp53i11"/>
</dbReference>
<dbReference type="VEuPathDB" id="HostDB:ENSRNOG00000008738"/>
<dbReference type="eggNOG" id="ENOG502QQ2K">
    <property type="taxonomic scope" value="Eukaryota"/>
</dbReference>
<dbReference type="HOGENOM" id="CLU_099575_1_0_1"/>
<dbReference type="InParanoid" id="B3DMA0"/>
<dbReference type="OrthoDB" id="6243248at2759"/>
<dbReference type="PhylomeDB" id="B3DMA0"/>
<dbReference type="TreeFam" id="TF321310"/>
<dbReference type="PRO" id="PR:B3DMA0"/>
<dbReference type="Proteomes" id="UP000002494">
    <property type="component" value="Chromosome 3"/>
</dbReference>
<dbReference type="Proteomes" id="UP000234681">
    <property type="component" value="Chromosome 3"/>
</dbReference>
<dbReference type="Bgee" id="ENSRNOG00000008738">
    <property type="expression patterns" value="Expressed in thymus and 20 other cell types or tissues"/>
</dbReference>
<dbReference type="GO" id="GO:0016020">
    <property type="term" value="C:membrane"/>
    <property type="evidence" value="ECO:0007669"/>
    <property type="project" value="UniProtKB-SubCell"/>
</dbReference>
<dbReference type="InterPro" id="IPR028266">
    <property type="entry name" value="TP53I11"/>
</dbReference>
<dbReference type="PANTHER" id="PTHR31584">
    <property type="entry name" value="TUMOR PROTEIN P53-INDUCIBLE PROTEIN 11"/>
    <property type="match status" value="1"/>
</dbReference>
<dbReference type="PANTHER" id="PTHR31584:SF1">
    <property type="entry name" value="TUMOR PROTEIN P53-INDUCIBLE PROTEIN 11"/>
    <property type="match status" value="1"/>
</dbReference>
<dbReference type="Pfam" id="PF14936">
    <property type="entry name" value="p53-inducible11"/>
    <property type="match status" value="1"/>
</dbReference>
<organism>
    <name type="scientific">Rattus norvegicus</name>
    <name type="common">Rat</name>
    <dbReference type="NCBI Taxonomy" id="10116"/>
    <lineage>
        <taxon>Eukaryota</taxon>
        <taxon>Metazoa</taxon>
        <taxon>Chordata</taxon>
        <taxon>Craniata</taxon>
        <taxon>Vertebrata</taxon>
        <taxon>Euteleostomi</taxon>
        <taxon>Mammalia</taxon>
        <taxon>Eutheria</taxon>
        <taxon>Euarchontoglires</taxon>
        <taxon>Glires</taxon>
        <taxon>Rodentia</taxon>
        <taxon>Myomorpha</taxon>
        <taxon>Muroidea</taxon>
        <taxon>Muridae</taxon>
        <taxon>Murinae</taxon>
        <taxon>Rattus</taxon>
    </lineage>
</organism>